<name>RPAB1_CANGA</name>
<reference key="1">
    <citation type="journal article" date="2004" name="Nature">
        <title>Genome evolution in yeasts.</title>
        <authorList>
            <person name="Dujon B."/>
            <person name="Sherman D."/>
            <person name="Fischer G."/>
            <person name="Durrens P."/>
            <person name="Casaregola S."/>
            <person name="Lafontaine I."/>
            <person name="de Montigny J."/>
            <person name="Marck C."/>
            <person name="Neuveglise C."/>
            <person name="Talla E."/>
            <person name="Goffard N."/>
            <person name="Frangeul L."/>
            <person name="Aigle M."/>
            <person name="Anthouard V."/>
            <person name="Babour A."/>
            <person name="Barbe V."/>
            <person name="Barnay S."/>
            <person name="Blanchin S."/>
            <person name="Beckerich J.-M."/>
            <person name="Beyne E."/>
            <person name="Bleykasten C."/>
            <person name="Boisrame A."/>
            <person name="Boyer J."/>
            <person name="Cattolico L."/>
            <person name="Confanioleri F."/>
            <person name="de Daruvar A."/>
            <person name="Despons L."/>
            <person name="Fabre E."/>
            <person name="Fairhead C."/>
            <person name="Ferry-Dumazet H."/>
            <person name="Groppi A."/>
            <person name="Hantraye F."/>
            <person name="Hennequin C."/>
            <person name="Jauniaux N."/>
            <person name="Joyet P."/>
            <person name="Kachouri R."/>
            <person name="Kerrest A."/>
            <person name="Koszul R."/>
            <person name="Lemaire M."/>
            <person name="Lesur I."/>
            <person name="Ma L."/>
            <person name="Muller H."/>
            <person name="Nicaud J.-M."/>
            <person name="Nikolski M."/>
            <person name="Oztas S."/>
            <person name="Ozier-Kalogeropoulos O."/>
            <person name="Pellenz S."/>
            <person name="Potier S."/>
            <person name="Richard G.-F."/>
            <person name="Straub M.-L."/>
            <person name="Suleau A."/>
            <person name="Swennen D."/>
            <person name="Tekaia F."/>
            <person name="Wesolowski-Louvel M."/>
            <person name="Westhof E."/>
            <person name="Wirth B."/>
            <person name="Zeniou-Meyer M."/>
            <person name="Zivanovic Y."/>
            <person name="Bolotin-Fukuhara M."/>
            <person name="Thierry A."/>
            <person name="Bouchier C."/>
            <person name="Caudron B."/>
            <person name="Scarpelli C."/>
            <person name="Gaillardin C."/>
            <person name="Weissenbach J."/>
            <person name="Wincker P."/>
            <person name="Souciet J.-L."/>
        </authorList>
    </citation>
    <scope>NUCLEOTIDE SEQUENCE [LARGE SCALE GENOMIC DNA]</scope>
    <source>
        <strain>ATCC 2001 / BCRC 20586 / JCM 3761 / NBRC 0622 / NRRL Y-65 / CBS 138</strain>
    </source>
</reference>
<dbReference type="EMBL" id="CR380955">
    <property type="protein sequence ID" value="CAG60525.1"/>
    <property type="molecule type" value="Genomic_DNA"/>
</dbReference>
<dbReference type="RefSeq" id="XP_447588.1">
    <property type="nucleotide sequence ID" value="XM_447588.1"/>
</dbReference>
<dbReference type="SMR" id="Q6FQA6"/>
<dbReference type="FunCoup" id="Q6FQA6">
    <property type="interactions" value="1165"/>
</dbReference>
<dbReference type="STRING" id="284593.Q6FQA6"/>
<dbReference type="EnsemblFungi" id="CAGL0I07799g-T">
    <property type="protein sequence ID" value="CAGL0I07799g-T-p1"/>
    <property type="gene ID" value="CAGL0I07799g"/>
</dbReference>
<dbReference type="KEGG" id="cgr:2889008"/>
<dbReference type="CGD" id="CAL0132208">
    <property type="gene designation" value="CAGL0I07799g"/>
</dbReference>
<dbReference type="VEuPathDB" id="FungiDB:B1J91_I07799g"/>
<dbReference type="VEuPathDB" id="FungiDB:CAGL0I07799g"/>
<dbReference type="eggNOG" id="KOG3218">
    <property type="taxonomic scope" value="Eukaryota"/>
</dbReference>
<dbReference type="HOGENOM" id="CLU_058320_0_0_1"/>
<dbReference type="InParanoid" id="Q6FQA6"/>
<dbReference type="OMA" id="VRDRGYF"/>
<dbReference type="Proteomes" id="UP000002428">
    <property type="component" value="Chromosome I"/>
</dbReference>
<dbReference type="GO" id="GO:0005736">
    <property type="term" value="C:RNA polymerase I complex"/>
    <property type="evidence" value="ECO:0007669"/>
    <property type="project" value="EnsemblFungi"/>
</dbReference>
<dbReference type="GO" id="GO:0005665">
    <property type="term" value="C:RNA polymerase II, core complex"/>
    <property type="evidence" value="ECO:0007669"/>
    <property type="project" value="EnsemblFungi"/>
</dbReference>
<dbReference type="GO" id="GO:0005666">
    <property type="term" value="C:RNA polymerase III complex"/>
    <property type="evidence" value="ECO:0007669"/>
    <property type="project" value="EnsemblFungi"/>
</dbReference>
<dbReference type="GO" id="GO:0003677">
    <property type="term" value="F:DNA binding"/>
    <property type="evidence" value="ECO:0007669"/>
    <property type="project" value="InterPro"/>
</dbReference>
<dbReference type="GO" id="GO:0003899">
    <property type="term" value="F:DNA-directed RNA polymerase activity"/>
    <property type="evidence" value="ECO:0007669"/>
    <property type="project" value="EnsemblFungi"/>
</dbReference>
<dbReference type="GO" id="GO:0003968">
    <property type="term" value="F:RNA-directed RNA polymerase activity"/>
    <property type="evidence" value="ECO:0007669"/>
    <property type="project" value="EnsemblFungi"/>
</dbReference>
<dbReference type="GO" id="GO:0006363">
    <property type="term" value="P:termination of RNA polymerase I transcription"/>
    <property type="evidence" value="ECO:0007669"/>
    <property type="project" value="EnsemblFungi"/>
</dbReference>
<dbReference type="GO" id="GO:0006386">
    <property type="term" value="P:termination of RNA polymerase III transcription"/>
    <property type="evidence" value="ECO:0007669"/>
    <property type="project" value="EnsemblFungi"/>
</dbReference>
<dbReference type="GO" id="GO:0006362">
    <property type="term" value="P:transcription elongation by RNA polymerase I"/>
    <property type="evidence" value="ECO:0007669"/>
    <property type="project" value="EnsemblFungi"/>
</dbReference>
<dbReference type="GO" id="GO:0006368">
    <property type="term" value="P:transcription elongation by RNA polymerase II"/>
    <property type="evidence" value="ECO:0007669"/>
    <property type="project" value="EnsemblFungi"/>
</dbReference>
<dbReference type="GO" id="GO:0006361">
    <property type="term" value="P:transcription initiation at RNA polymerase I promoter"/>
    <property type="evidence" value="ECO:0007669"/>
    <property type="project" value="EnsemblFungi"/>
</dbReference>
<dbReference type="GO" id="GO:0006367">
    <property type="term" value="P:transcription initiation at RNA polymerase II promoter"/>
    <property type="evidence" value="ECO:0007669"/>
    <property type="project" value="EnsemblFungi"/>
</dbReference>
<dbReference type="GO" id="GO:0006384">
    <property type="term" value="P:transcription initiation at RNA polymerase III promoter"/>
    <property type="evidence" value="ECO:0007669"/>
    <property type="project" value="EnsemblFungi"/>
</dbReference>
<dbReference type="GO" id="GO:0042797">
    <property type="term" value="P:tRNA transcription by RNA polymerase III"/>
    <property type="evidence" value="ECO:0007669"/>
    <property type="project" value="EnsemblFungi"/>
</dbReference>
<dbReference type="FunFam" id="3.40.1340.10:FF:000002">
    <property type="entry name" value="DNA-directed RNA polymerases I, II, and III subunit RPABC1"/>
    <property type="match status" value="1"/>
</dbReference>
<dbReference type="FunFam" id="3.90.940.20:FF:000001">
    <property type="entry name" value="DNA-directed RNA polymerases I, II, and III subunit RPABC1"/>
    <property type="match status" value="1"/>
</dbReference>
<dbReference type="Gene3D" id="3.40.1340.10">
    <property type="entry name" value="RNA polymerase, Rpb5, N-terminal domain"/>
    <property type="match status" value="1"/>
</dbReference>
<dbReference type="Gene3D" id="3.90.940.20">
    <property type="entry name" value="RPB5-like RNA polymerase subunit"/>
    <property type="match status" value="1"/>
</dbReference>
<dbReference type="HAMAP" id="MF_00025">
    <property type="entry name" value="RNApol_Rpo5_RPB5"/>
    <property type="match status" value="1"/>
</dbReference>
<dbReference type="InterPro" id="IPR014381">
    <property type="entry name" value="Arch_Rpo5/euc_Rpb5"/>
</dbReference>
<dbReference type="InterPro" id="IPR005571">
    <property type="entry name" value="RNA_pol_Rpb5_N"/>
</dbReference>
<dbReference type="InterPro" id="IPR036710">
    <property type="entry name" value="RNA_pol_Rpb5_N_sf"/>
</dbReference>
<dbReference type="InterPro" id="IPR000783">
    <property type="entry name" value="RNA_pol_subH/Rpb5_C"/>
</dbReference>
<dbReference type="InterPro" id="IPR020608">
    <property type="entry name" value="RNA_pol_subH/Rpb5_CS"/>
</dbReference>
<dbReference type="InterPro" id="IPR035913">
    <property type="entry name" value="RPB5-like_sf"/>
</dbReference>
<dbReference type="NCBIfam" id="NF007129">
    <property type="entry name" value="PRK09570.1"/>
    <property type="match status" value="1"/>
</dbReference>
<dbReference type="PANTHER" id="PTHR10535">
    <property type="entry name" value="DNA-DIRECTED RNA POLYMERASES I, II, AND III SUBUNIT RPABC1"/>
    <property type="match status" value="1"/>
</dbReference>
<dbReference type="PANTHER" id="PTHR10535:SF0">
    <property type="entry name" value="DNA-DIRECTED RNA POLYMERASES I, II, AND III SUBUNIT RPABC1"/>
    <property type="match status" value="1"/>
</dbReference>
<dbReference type="Pfam" id="PF01191">
    <property type="entry name" value="RNA_pol_Rpb5_C"/>
    <property type="match status" value="1"/>
</dbReference>
<dbReference type="Pfam" id="PF03871">
    <property type="entry name" value="RNA_pol_Rpb5_N"/>
    <property type="match status" value="1"/>
</dbReference>
<dbReference type="PIRSF" id="PIRSF000747">
    <property type="entry name" value="RPB5"/>
    <property type="match status" value="1"/>
</dbReference>
<dbReference type="SUPFAM" id="SSF53036">
    <property type="entry name" value="Eukaryotic RPB5 N-terminal domain"/>
    <property type="match status" value="1"/>
</dbReference>
<dbReference type="SUPFAM" id="SSF55287">
    <property type="entry name" value="RPB5-like RNA polymerase subunit"/>
    <property type="match status" value="1"/>
</dbReference>
<dbReference type="PROSITE" id="PS01110">
    <property type="entry name" value="RNA_POL_H_23KD"/>
    <property type="match status" value="1"/>
</dbReference>
<gene>
    <name type="primary">RPB5</name>
    <name type="ordered locus">CAGL0I07799g</name>
</gene>
<comment type="function">
    <text evidence="1">DNA-dependent RNA polymerase catalyzes the transcription of DNA into RNA using the four ribonucleoside triphosphates as substrates. Common component of RNA polymerases I, II and III which synthesize ribosomal RNA precursors, mRNA precursors and many functional non-coding RNAs, and small RNAs, such as 5S rRNA and tRNAs, respectively. Pol II is the central component of the basal RNA polymerase II transcription machinery. Pols are composed of mobile elements that move relative to each other. In Pol II, RPB5 is part of the lower jaw surrounding the central large cleft and thought to grab the incoming DNA template. Seems to be the major component in this process (By similarity).</text>
</comment>
<comment type="subunit">
    <text evidence="1">Component of the RNA polymerase I (Pol I), RNA polymerase II (Pol II) and RNA polymerase III (Pol III) complexes consisting of at least 14, 12 and 17 subunits, respectively.</text>
</comment>
<comment type="subcellular location">
    <subcellularLocation>
        <location evidence="1">Nucleus</location>
    </subcellularLocation>
</comment>
<comment type="similarity">
    <text evidence="2">Belongs to the archaeal Rpo5/eukaryotic RPB5 RNA polymerase subunit family.</text>
</comment>
<sequence>MDQENDRSISRLWRTFRTVKEMVRDRGYFIAQEELDLTLEDFKVKYCDSMGRAQRKMMSFQANPTEESMTKFPDMGTLWVEFCDEPSVGVKTMKTFVIHIQEKQFQTGIFIYQNNITPSAMKLVPSIPPATIETFHEAALVVNITHHDLVPKHIRLNEEEKAELLKRYRLKESQLPRIQRADPVALYLGLKRGEVVKIIRKSETAGRYASYRICM</sequence>
<accession>Q6FQA6</accession>
<organism>
    <name type="scientific">Candida glabrata (strain ATCC 2001 / BCRC 20586 / JCM 3761 / NBRC 0622 / NRRL Y-65 / CBS 138)</name>
    <name type="common">Yeast</name>
    <name type="synonym">Nakaseomyces glabratus</name>
    <dbReference type="NCBI Taxonomy" id="284593"/>
    <lineage>
        <taxon>Eukaryota</taxon>
        <taxon>Fungi</taxon>
        <taxon>Dikarya</taxon>
        <taxon>Ascomycota</taxon>
        <taxon>Saccharomycotina</taxon>
        <taxon>Saccharomycetes</taxon>
        <taxon>Saccharomycetales</taxon>
        <taxon>Saccharomycetaceae</taxon>
        <taxon>Nakaseomyces</taxon>
    </lineage>
</organism>
<protein>
    <recommendedName>
        <fullName>DNA-directed RNA polymerases I, II, and III subunit RPABC1</fullName>
        <shortName>RNA polymerases I, II, and III subunit ABC1</shortName>
    </recommendedName>
</protein>
<evidence type="ECO:0000250" key="1"/>
<evidence type="ECO:0000305" key="2"/>
<feature type="chain" id="PRO_0000146080" description="DNA-directed RNA polymerases I, II, and III subunit RPABC1">
    <location>
        <begin position="1"/>
        <end position="215"/>
    </location>
</feature>
<keyword id="KW-0240">DNA-directed RNA polymerase</keyword>
<keyword id="KW-0539">Nucleus</keyword>
<keyword id="KW-1185">Reference proteome</keyword>
<keyword id="KW-0804">Transcription</keyword>
<proteinExistence type="inferred from homology"/>